<name>COX8B_RABIT</name>
<dbReference type="InParanoid" id="P80336"/>
<dbReference type="UniPathway" id="UPA00705"/>
<dbReference type="Proteomes" id="UP000001811">
    <property type="component" value="Unplaced"/>
</dbReference>
<dbReference type="GO" id="GO:0005743">
    <property type="term" value="C:mitochondrial inner membrane"/>
    <property type="evidence" value="ECO:0007669"/>
    <property type="project" value="UniProtKB-SubCell"/>
</dbReference>
<dbReference type="GO" id="GO:0006119">
    <property type="term" value="P:oxidative phosphorylation"/>
    <property type="evidence" value="ECO:0007669"/>
    <property type="project" value="UniProtKB-UniPathway"/>
</dbReference>
<feature type="chain" id="PRO_0000150123" description="Cytochrome c oxidase subunit 8B, mitochondrial">
    <location>
        <begin position="1"/>
        <end position="10" status="greater than"/>
    </location>
</feature>
<feature type="non-terminal residue">
    <location>
        <position position="10"/>
    </location>
</feature>
<accession>P80336</accession>
<keyword id="KW-0903">Direct protein sequencing</keyword>
<keyword id="KW-0472">Membrane</keyword>
<keyword id="KW-0496">Mitochondrion</keyword>
<keyword id="KW-0999">Mitochondrion inner membrane</keyword>
<keyword id="KW-1185">Reference proteome</keyword>
<proteinExistence type="evidence at protein level"/>
<sequence length="10" mass="1027">ISGKPARTPT</sequence>
<protein>
    <recommendedName>
        <fullName>Cytochrome c oxidase subunit 8B, mitochondrial</fullName>
    </recommendedName>
    <alternativeName>
        <fullName>Cytochrome c oxidase polypeptide VIII-liver/heart</fullName>
    </alternativeName>
    <alternativeName>
        <fullName>Cytochrome c oxidase subunit 8-1</fullName>
    </alternativeName>
    <alternativeName>
        <fullName>Cytochrome c oxidase subunit 8H</fullName>
    </alternativeName>
</protein>
<evidence type="ECO:0000250" key="1">
    <source>
        <dbReference type="UniProtKB" id="P10175"/>
    </source>
</evidence>
<evidence type="ECO:0000305" key="2"/>
<comment type="function">
    <text evidence="1">Component of the cytochrome c oxidase, the last enzyme in the mitochondrial electron transport chain which drives oxidative phosphorylation. The respiratory chain contains 3 multisubunit complexes succinate dehydrogenase (complex II, CII), ubiquinol-cytochrome c oxidoreductase (cytochrome b-c1 complex, complex III, CIII) and cytochrome c oxidase (complex IV, CIV), that cooperate to transfer electrons derived from NADH and succinate to molecular oxygen, creating an electrochemical gradient over the inner membrane that drives transmembrane transport and the ATP synthase. Cytochrome c oxidase is the component of the respiratory chain that catalyzes the reduction of oxygen to water. Electrons originating from reduced cytochrome c in the intermembrane space (IMS) are transferred via the dinuclear copper A center (CU(A)) of subunit 2 and heme A of subunit 1 to the active site in subunit 1, a binuclear center (BNC) formed by heme A3 and copper B (CU(B)). The BNC reduces molecular oxygen to 2 water molecules using 4 electrons from cytochrome c in the IMS and 4 protons from the mitochondrial matrix.</text>
</comment>
<comment type="pathway">
    <text evidence="1">Energy metabolism; oxidative phosphorylation.</text>
</comment>
<comment type="subunit">
    <text evidence="1">Component of the cytochrome c oxidase (complex IV, CIV), a multisubunit enzyme composed of 14 subunits. The complex is composed of a catalytic core of 3 subunits MT-CO1, MT-CO2 and MT-CO3, encoded in the mitochondrial DNA, and 11 supernumerary subunits COX4I, COX5A, COX5B, COX6A, COX6B, COX6C, COX7A, COX7B, COX7C, COX8 and NDUFA4, which are encoded in the nuclear genome. The complex exists as a monomer or a dimer and forms supercomplexes (SCs) in the inner mitochondrial membrane with NADH-ubiquinone oxidoreductase (complex I, CI) and ubiquinol-cytochrome c oxidoreductase (cytochrome b-c1 complex, complex III, CIII), resulting in different assemblies (supercomplex SCI(1)III(2)IV(1) and megacomplex MCI(2)III(2)IV(2)).</text>
</comment>
<comment type="subcellular location">
    <subcellularLocation>
        <location evidence="1">Mitochondrion inner membrane</location>
        <topology evidence="1">Single-pass membrane protein</topology>
    </subcellularLocation>
</comment>
<comment type="tissue specificity">
    <text>Liver and heart specific isoform.</text>
</comment>
<comment type="similarity">
    <text evidence="2">Belongs to the cytochrome c oxidase VIII family.</text>
</comment>
<reference key="1">
    <citation type="journal article" date="1995" name="Comp. Biochem. Physiol.">
        <title>Species-specific expression of cytochrome c oxidase isozymes.</title>
        <authorList>
            <person name="Linder D."/>
            <person name="Freund R."/>
            <person name="Kadenbach B."/>
        </authorList>
    </citation>
    <scope>PROTEIN SEQUENCE</scope>
    <source>
        <tissue>Heart</tissue>
        <tissue>Liver</tissue>
    </source>
</reference>
<organism>
    <name type="scientific">Oryctolagus cuniculus</name>
    <name type="common">Rabbit</name>
    <dbReference type="NCBI Taxonomy" id="9986"/>
    <lineage>
        <taxon>Eukaryota</taxon>
        <taxon>Metazoa</taxon>
        <taxon>Chordata</taxon>
        <taxon>Craniata</taxon>
        <taxon>Vertebrata</taxon>
        <taxon>Euteleostomi</taxon>
        <taxon>Mammalia</taxon>
        <taxon>Eutheria</taxon>
        <taxon>Euarchontoglires</taxon>
        <taxon>Glires</taxon>
        <taxon>Lagomorpha</taxon>
        <taxon>Leporidae</taxon>
        <taxon>Oryctolagus</taxon>
    </lineage>
</organism>
<gene>
    <name type="primary">COX8B</name>
    <name type="synonym">COX8H</name>
</gene>